<accession>C3PI04</accession>
<sequence>MAHKKGASSSSNGRDSESKRLGVKRFGGQQVKAGEIIVRQRGTKFHPGENVGRGGDDTLFALAAGSVEFGVKRGRRLVNIVPAEEAAAEATA</sequence>
<organism>
    <name type="scientific">Corynebacterium aurimucosum (strain ATCC 700975 / DSM 44827 / CIP 107346 / CN-1)</name>
    <name type="common">Corynebacterium nigricans</name>
    <dbReference type="NCBI Taxonomy" id="548476"/>
    <lineage>
        <taxon>Bacteria</taxon>
        <taxon>Bacillati</taxon>
        <taxon>Actinomycetota</taxon>
        <taxon>Actinomycetes</taxon>
        <taxon>Mycobacteriales</taxon>
        <taxon>Corynebacteriaceae</taxon>
        <taxon>Corynebacterium</taxon>
    </lineage>
</organism>
<name>RL27_CORA7</name>
<reference key="1">
    <citation type="journal article" date="2010" name="BMC Genomics">
        <title>Complete genome sequence and lifestyle of black-pigmented Corynebacterium aurimucosum ATCC 700975 (formerly C. nigricans CN-1) isolated from a vaginal swab of a woman with spontaneous abortion.</title>
        <authorList>
            <person name="Trost E."/>
            <person name="Gotker S."/>
            <person name="Schneider J."/>
            <person name="Schneiker-Bekel S."/>
            <person name="Szczepanowski R."/>
            <person name="Tilker A."/>
            <person name="Viehoever P."/>
            <person name="Arnold W."/>
            <person name="Bekel T."/>
            <person name="Blom J."/>
            <person name="Gartemann K.H."/>
            <person name="Linke B."/>
            <person name="Goesmann A."/>
            <person name="Puhler A."/>
            <person name="Shukla S.K."/>
            <person name="Tauch A."/>
        </authorList>
    </citation>
    <scope>NUCLEOTIDE SEQUENCE [LARGE SCALE GENOMIC DNA]</scope>
    <source>
        <strain>ATCC 700975 / DSM 44827 / CIP 107346 / CN-1</strain>
    </source>
</reference>
<keyword id="KW-1185">Reference proteome</keyword>
<keyword id="KW-0687">Ribonucleoprotein</keyword>
<keyword id="KW-0689">Ribosomal protein</keyword>
<evidence type="ECO:0000255" key="1">
    <source>
        <dbReference type="HAMAP-Rule" id="MF_00539"/>
    </source>
</evidence>
<evidence type="ECO:0000256" key="2">
    <source>
        <dbReference type="SAM" id="MobiDB-lite"/>
    </source>
</evidence>
<evidence type="ECO:0000305" key="3"/>
<feature type="chain" id="PRO_1000146523" description="Large ribosomal subunit protein bL27">
    <location>
        <begin position="1"/>
        <end position="92"/>
    </location>
</feature>
<feature type="region of interest" description="Disordered" evidence="2">
    <location>
        <begin position="1"/>
        <end position="26"/>
    </location>
</feature>
<gene>
    <name evidence="1" type="primary">rpmA</name>
    <name type="ordered locus">cauri_1865</name>
</gene>
<protein>
    <recommendedName>
        <fullName evidence="1">Large ribosomal subunit protein bL27</fullName>
    </recommendedName>
    <alternativeName>
        <fullName evidence="3">50S ribosomal protein L27</fullName>
    </alternativeName>
</protein>
<comment type="similarity">
    <text evidence="1">Belongs to the bacterial ribosomal protein bL27 family.</text>
</comment>
<proteinExistence type="inferred from homology"/>
<dbReference type="EMBL" id="CP001601">
    <property type="protein sequence ID" value="ACP33458.1"/>
    <property type="molecule type" value="Genomic_DNA"/>
</dbReference>
<dbReference type="RefSeq" id="WP_010190882.1">
    <property type="nucleotide sequence ID" value="NZ_ACLH01000093.1"/>
</dbReference>
<dbReference type="SMR" id="C3PI04"/>
<dbReference type="STRING" id="548476.cauri_1865"/>
<dbReference type="GeneID" id="31924499"/>
<dbReference type="KEGG" id="car:cauri_1865"/>
<dbReference type="eggNOG" id="COG0211">
    <property type="taxonomic scope" value="Bacteria"/>
</dbReference>
<dbReference type="HOGENOM" id="CLU_095424_4_0_11"/>
<dbReference type="OrthoDB" id="9803474at2"/>
<dbReference type="Proteomes" id="UP000002077">
    <property type="component" value="Chromosome"/>
</dbReference>
<dbReference type="GO" id="GO:0022625">
    <property type="term" value="C:cytosolic large ribosomal subunit"/>
    <property type="evidence" value="ECO:0007669"/>
    <property type="project" value="TreeGrafter"/>
</dbReference>
<dbReference type="GO" id="GO:0003735">
    <property type="term" value="F:structural constituent of ribosome"/>
    <property type="evidence" value="ECO:0007669"/>
    <property type="project" value="InterPro"/>
</dbReference>
<dbReference type="GO" id="GO:0006412">
    <property type="term" value="P:translation"/>
    <property type="evidence" value="ECO:0007669"/>
    <property type="project" value="UniProtKB-UniRule"/>
</dbReference>
<dbReference type="FunFam" id="2.40.50.100:FF:000020">
    <property type="entry name" value="50S ribosomal protein L27"/>
    <property type="match status" value="1"/>
</dbReference>
<dbReference type="Gene3D" id="2.40.50.100">
    <property type="match status" value="1"/>
</dbReference>
<dbReference type="HAMAP" id="MF_00539">
    <property type="entry name" value="Ribosomal_bL27"/>
    <property type="match status" value="1"/>
</dbReference>
<dbReference type="InterPro" id="IPR001684">
    <property type="entry name" value="Ribosomal_bL27"/>
</dbReference>
<dbReference type="InterPro" id="IPR018261">
    <property type="entry name" value="Ribosomal_bL27_CS"/>
</dbReference>
<dbReference type="NCBIfam" id="TIGR00062">
    <property type="entry name" value="L27"/>
    <property type="match status" value="1"/>
</dbReference>
<dbReference type="PANTHER" id="PTHR15893:SF0">
    <property type="entry name" value="LARGE RIBOSOMAL SUBUNIT PROTEIN BL27M"/>
    <property type="match status" value="1"/>
</dbReference>
<dbReference type="PANTHER" id="PTHR15893">
    <property type="entry name" value="RIBOSOMAL PROTEIN L27"/>
    <property type="match status" value="1"/>
</dbReference>
<dbReference type="Pfam" id="PF01016">
    <property type="entry name" value="Ribosomal_L27"/>
    <property type="match status" value="1"/>
</dbReference>
<dbReference type="PRINTS" id="PR00063">
    <property type="entry name" value="RIBOSOMALL27"/>
</dbReference>
<dbReference type="SUPFAM" id="SSF110324">
    <property type="entry name" value="Ribosomal L27 protein-like"/>
    <property type="match status" value="1"/>
</dbReference>
<dbReference type="PROSITE" id="PS00831">
    <property type="entry name" value="RIBOSOMAL_L27"/>
    <property type="match status" value="1"/>
</dbReference>